<gene>
    <name evidence="1" type="primary">ves</name>
    <name type="ordered locus">EcHS_A1824</name>
</gene>
<evidence type="ECO:0000255" key="1">
    <source>
        <dbReference type="HAMAP-Rule" id="MF_01591"/>
    </source>
</evidence>
<name>VES_ECOHS</name>
<reference key="1">
    <citation type="journal article" date="2008" name="J. Bacteriol.">
        <title>The pangenome structure of Escherichia coli: comparative genomic analysis of E. coli commensal and pathogenic isolates.</title>
        <authorList>
            <person name="Rasko D.A."/>
            <person name="Rosovitz M.J."/>
            <person name="Myers G.S.A."/>
            <person name="Mongodin E.F."/>
            <person name="Fricke W.F."/>
            <person name="Gajer P."/>
            <person name="Crabtree J."/>
            <person name="Sebaihia M."/>
            <person name="Thomson N.R."/>
            <person name="Chaudhuri R."/>
            <person name="Henderson I.R."/>
            <person name="Sperandio V."/>
            <person name="Ravel J."/>
        </authorList>
    </citation>
    <scope>NUCLEOTIDE SEQUENCE [LARGE SCALE GENOMIC DNA]</scope>
    <source>
        <strain>HS</strain>
    </source>
</reference>
<dbReference type="EMBL" id="CP000802">
    <property type="protein sequence ID" value="ABV06137.1"/>
    <property type="molecule type" value="Genomic_DNA"/>
</dbReference>
<dbReference type="RefSeq" id="WP_001300480.1">
    <property type="nucleotide sequence ID" value="NC_009800.1"/>
</dbReference>
<dbReference type="SMR" id="A8A0T3"/>
<dbReference type="KEGG" id="ecx:EcHS_A1824"/>
<dbReference type="HOGENOM" id="CLU_090931_5_0_6"/>
<dbReference type="CDD" id="cd20293">
    <property type="entry name" value="cupin_HutD_N"/>
    <property type="match status" value="1"/>
</dbReference>
<dbReference type="Gene3D" id="2.60.120.10">
    <property type="entry name" value="Jelly Rolls"/>
    <property type="match status" value="1"/>
</dbReference>
<dbReference type="HAMAP" id="MF_01591">
    <property type="entry name" value="Ves"/>
    <property type="match status" value="1"/>
</dbReference>
<dbReference type="InterPro" id="IPR014710">
    <property type="entry name" value="RmlC-like_jellyroll"/>
</dbReference>
<dbReference type="InterPro" id="IPR011051">
    <property type="entry name" value="RmlC_Cupin_sf"/>
</dbReference>
<dbReference type="InterPro" id="IPR010282">
    <property type="entry name" value="Uncharacterised_HutD/Ves"/>
</dbReference>
<dbReference type="InterPro" id="IPR023482">
    <property type="entry name" value="Uncharacterised_Ves"/>
</dbReference>
<dbReference type="NCBIfam" id="NF008488">
    <property type="entry name" value="PRK11396.1"/>
    <property type="match status" value="1"/>
</dbReference>
<dbReference type="PANTHER" id="PTHR37943">
    <property type="entry name" value="PROTEIN VES"/>
    <property type="match status" value="1"/>
</dbReference>
<dbReference type="PANTHER" id="PTHR37943:SF1">
    <property type="entry name" value="PROTEIN VES"/>
    <property type="match status" value="1"/>
</dbReference>
<dbReference type="Pfam" id="PF05962">
    <property type="entry name" value="HutD"/>
    <property type="match status" value="1"/>
</dbReference>
<dbReference type="SUPFAM" id="SSF51182">
    <property type="entry name" value="RmlC-like cupins"/>
    <property type="match status" value="1"/>
</dbReference>
<sequence>MEYFDMRKMSVNLWRNAAGETREICTFPPAKRDFYWRASIASIAANGEFSLFPGMERIVTLLEGGEMLLESADRFNHTLKPFQPFAFAADQVVKAKLTAGQMSMDFNIMTRLDVCKAKVRIAERTFTTFGSRGGVVFVINGAWQLGDKLLTTDQGACWFDGRHTLRLLQPQGKLLFSEINWLAGHSPDQVQ</sequence>
<organism>
    <name type="scientific">Escherichia coli O9:H4 (strain HS)</name>
    <dbReference type="NCBI Taxonomy" id="331112"/>
    <lineage>
        <taxon>Bacteria</taxon>
        <taxon>Pseudomonadati</taxon>
        <taxon>Pseudomonadota</taxon>
        <taxon>Gammaproteobacteria</taxon>
        <taxon>Enterobacterales</taxon>
        <taxon>Enterobacteriaceae</taxon>
        <taxon>Escherichia</taxon>
    </lineage>
</organism>
<proteinExistence type="inferred from homology"/>
<feature type="chain" id="PRO_1000069336" description="Protein Ves">
    <location>
        <begin position="1"/>
        <end position="191"/>
    </location>
</feature>
<comment type="similarity">
    <text evidence="1">Belongs to the Ves family.</text>
</comment>
<protein>
    <recommendedName>
        <fullName evidence="1">Protein Ves</fullName>
    </recommendedName>
</protein>
<accession>A8A0T3</accession>